<sequence length="1380" mass="153466">MKAPAALAPGILVLLLTLVQKGGGECREALAKSEMNVNMRYRLPNFTADTPIQNVVVHEGHVFLGAINSIYVLRERDLQQVSEYKTGPVWEHPDCLPCQACGLAGGQWRENVNMALLVETYYDDQLISCGSVHRGTCQRHVLPRDNPADIQAEVHCMHSPRADEDEASQCPDCVVSALGTKVLLAEKQRFVNFFVGNTLNGSSLPGHALHSISVRRIKETQDGFKFLTDKSYIDVLPEFQASYPIKYIHAFESNRFIYFLTVQRETLDSPSFHTRIIRFCSADSGLRSYMEMPLECILTEKRRKRALRSEVFNVLQAAYVGKPGAQLAKQIGASAHDDILYGVFSQSRPDSAEPTDRSALCAFPVKYVDEFFHRIVNKNNVRCLQHFYGPNHLHCFNRTLLRNSSGCEVRSDEYRTEFTTALQRIDLSAGHFSQVLLTSISTFIKGDLTIANLGTSEGRFMQVVVSRSGSWTPHVDFRLDSHAVSPEVIVEHPVNQNGYTLVVTGKKITKIPLDGLGCEHFQSCSQCLSAPPFVQCGWCHDKCARAEDCPNGTWTQEICLPTIYEVFPASAPLEGGTTLTVCGWDFGFRRNNKSDFKRTRVLIGNESCPLTLSESTPNMLKCTVGPAMSEHSNLSIIISNVRGTAPQYRTFSYVDPEITSISPSYGPKAGGTLVTLTGKYLNSGNSRHISIGGKTCTLKSVSDSVLECYTPAQSISADFPVKLKIDLANREAYSFSYQENPLVVEIHPTKSFVSGGSTITVVGKNLNSVSVPRMIINVHEVEMNFTVACQQRSNSELICCTTPSLQQLDLQLPLKATAFFMLDGIHSRDFDLIYVPNPVFKLFEKPVMISMGNENVLEIKGNDIDPEAVKGEVLKVGNKSCENIHSYPESVLCTVPNDLLKLNSELNIEWKQAVSSTVLGKVIVQPDQNFTGLIVGVVSISVILLSSLGLFLWLKKRKQIKDLGSELVCYDARVHTPHLDRLVSARSVSPTTEMVSNESVDYRATFPEDQFPNSSQNGSCRQVQYPLPDLSPILTSGDSDISSPLLQNTVHIDLSALNPELVQAVQHVVIGPSSLIVHFNEVIGRGHFGCVYHGTLLDNDDRKIHCAVKSLNRITDIGEVSQFLTEGIIMKDFSHPNVLSLLGICLRSEGSPLVVLPYMKHGDLRNFIRNETHSPTVKDLIGFGLQVAKGMKYLASKKFVHRDLAARNCMLDGKFTVKVADFGLARDMYDKEYYSVHNKTGAKLPVKWMALESLQTQKFTTKSDVWSFGVLLWELMTRGAPPYPDVNTFDITVYLLQGRRLLQPEYCPDPLYEVMLKCWHPKAEMRPSFTELVSRISAIFSTFIGEHYVHVNATYVNVKCVAPYPSLLSSHDTVDGEVDT</sequence>
<name>MET_ECHTE</name>
<organism>
    <name type="scientific">Echinops telfairi</name>
    <name type="common">Lesser hedgehog tenrec</name>
    <dbReference type="NCBI Taxonomy" id="9371"/>
    <lineage>
        <taxon>Eukaryota</taxon>
        <taxon>Metazoa</taxon>
        <taxon>Chordata</taxon>
        <taxon>Craniata</taxon>
        <taxon>Vertebrata</taxon>
        <taxon>Euteleostomi</taxon>
        <taxon>Mammalia</taxon>
        <taxon>Eutheria</taxon>
        <taxon>Afrotheria</taxon>
        <taxon>Tenrecidae</taxon>
        <taxon>Tenrecinae</taxon>
        <taxon>Echinops</taxon>
    </lineage>
</organism>
<reference key="1">
    <citation type="submission" date="2006-12" db="EMBL/GenBank/DDBJ databases">
        <title>NISC comparative sequencing initiative.</title>
        <authorList>
            <person name="Antonellis A."/>
            <person name="Ayele K."/>
            <person name="Benjamin B."/>
            <person name="Blakesley R.W."/>
            <person name="Boakye A."/>
            <person name="Bouffard G.G."/>
            <person name="Brinkley C."/>
            <person name="Brooks S."/>
            <person name="Chu G."/>
            <person name="Coleman H."/>
            <person name="Engle J."/>
            <person name="Gestole M."/>
            <person name="Greene A."/>
            <person name="Guan X."/>
            <person name="Gupta J."/>
            <person name="Haghighi P."/>
            <person name="Han J."/>
            <person name="Hansen N."/>
            <person name="Ho S.-L."/>
            <person name="Hu P."/>
            <person name="Hunter G."/>
            <person name="Hurle B."/>
            <person name="Idol J.R."/>
            <person name="Kwong P."/>
            <person name="Laric P."/>
            <person name="Larson S."/>
            <person name="Lee-Lin S.-Q."/>
            <person name="Legaspi R."/>
            <person name="Madden M."/>
            <person name="Maduro Q.L."/>
            <person name="Maduro V.B."/>
            <person name="Margulies E.H."/>
            <person name="Masiello C."/>
            <person name="Maskeri B."/>
            <person name="McDowell J."/>
            <person name="Mojidi H.A."/>
            <person name="Mullikin J.C."/>
            <person name="Oestreicher J.S."/>
            <person name="Park M."/>
            <person name="Portnoy M.E."/>
            <person name="Prasad A."/>
            <person name="Puri O."/>
            <person name="Reddix-Dugue N."/>
            <person name="Schandler K."/>
            <person name="Schueler M.G."/>
            <person name="Sison C."/>
            <person name="Stantripop S."/>
            <person name="Stephen E."/>
            <person name="Taye A."/>
            <person name="Thomas J.W."/>
            <person name="Thomas P.J."/>
            <person name="Tsipouri V."/>
            <person name="Ung L."/>
            <person name="Vogt J.L."/>
            <person name="Wetherby K.D."/>
            <person name="Young A."/>
            <person name="Green E.D."/>
        </authorList>
    </citation>
    <scope>NUCLEOTIDE SEQUENCE [LARGE SCALE GENOMIC DNA]</scope>
</reference>
<evidence type="ECO:0000250" key="1"/>
<evidence type="ECO:0000250" key="2">
    <source>
        <dbReference type="UniProtKB" id="P08581"/>
    </source>
</evidence>
<evidence type="ECO:0000250" key="3">
    <source>
        <dbReference type="UniProtKB" id="P16056"/>
    </source>
</evidence>
<evidence type="ECO:0000255" key="4"/>
<evidence type="ECO:0000255" key="5">
    <source>
        <dbReference type="PROSITE-ProRule" id="PRU00159"/>
    </source>
</evidence>
<evidence type="ECO:0000255" key="6">
    <source>
        <dbReference type="PROSITE-ProRule" id="PRU00352"/>
    </source>
</evidence>
<evidence type="ECO:0000255" key="7">
    <source>
        <dbReference type="PROSITE-ProRule" id="PRU10028"/>
    </source>
</evidence>
<feature type="signal peptide" evidence="4">
    <location>
        <begin position="1"/>
        <end position="24"/>
    </location>
</feature>
<feature type="chain" id="PRO_0000280067" description="Hepatocyte growth factor receptor">
    <location>
        <begin position="25"/>
        <end position="1380"/>
    </location>
</feature>
<feature type="topological domain" description="Extracellular" evidence="4">
    <location>
        <begin position="25"/>
        <end position="931"/>
    </location>
</feature>
<feature type="transmembrane region" description="Helical" evidence="4">
    <location>
        <begin position="932"/>
        <end position="954"/>
    </location>
</feature>
<feature type="topological domain" description="Cytoplasmic" evidence="4">
    <location>
        <begin position="955"/>
        <end position="1380"/>
    </location>
</feature>
<feature type="domain" description="Sema" evidence="6">
    <location>
        <begin position="27"/>
        <end position="513"/>
    </location>
</feature>
<feature type="domain" description="IPT/TIG 1">
    <location>
        <begin position="561"/>
        <end position="654"/>
    </location>
</feature>
<feature type="domain" description="IPT/TIG 2">
    <location>
        <begin position="656"/>
        <end position="738"/>
    </location>
</feature>
<feature type="domain" description="IPT/TIG 3">
    <location>
        <begin position="741"/>
        <end position="835"/>
    </location>
</feature>
<feature type="domain" description="Protein kinase" evidence="5">
    <location>
        <begin position="1077"/>
        <end position="1344"/>
    </location>
</feature>
<feature type="region of interest" description="Interaction with RANBP9" evidence="1">
    <location>
        <begin position="1211"/>
        <end position="1380"/>
    </location>
</feature>
<feature type="region of interest" description="Interaction with MUC20" evidence="1">
    <location>
        <begin position="1319"/>
        <end position="1358"/>
    </location>
</feature>
<feature type="active site" description="Proton acceptor" evidence="5 7">
    <location>
        <position position="1203"/>
    </location>
</feature>
<feature type="binding site" evidence="5">
    <location>
        <begin position="1083"/>
        <end position="1091"/>
    </location>
    <ligand>
        <name>ATP</name>
        <dbReference type="ChEBI" id="CHEBI:30616"/>
    </ligand>
</feature>
<feature type="binding site" evidence="5">
    <location>
        <position position="1109"/>
    </location>
    <ligand>
        <name>ATP</name>
        <dbReference type="ChEBI" id="CHEBI:30616"/>
    </ligand>
</feature>
<feature type="site" description="Cleavage" evidence="4">
    <location>
        <begin position="305"/>
        <end position="306"/>
    </location>
</feature>
<feature type="modified residue" description="Phosphoserine" evidence="2">
    <location>
        <position position="965"/>
    </location>
</feature>
<feature type="modified residue" description="Phosphothreonine" evidence="2">
    <location>
        <position position="976"/>
    </location>
</feature>
<feature type="modified residue" description="Phosphoserine" evidence="2">
    <location>
        <position position="989"/>
    </location>
</feature>
<feature type="modified residue" description="Phosphoserine" evidence="2">
    <location>
        <position position="996"/>
    </location>
</feature>
<feature type="modified residue" description="Phosphoserine" evidence="2">
    <location>
        <position position="999"/>
    </location>
</feature>
<feature type="modified residue" description="Phosphotyrosine" evidence="2">
    <location>
        <position position="1002"/>
    </location>
</feature>
<feature type="modified residue" description="Phosphotyrosine" evidence="2">
    <location>
        <position position="1229"/>
    </location>
</feature>
<feature type="modified residue" description="Phosphotyrosine; by autocatalysis" evidence="2">
    <location>
        <position position="1233"/>
    </location>
</feature>
<feature type="modified residue" description="Phosphotyrosine; by autocatalysis" evidence="2">
    <location>
        <position position="1234"/>
    </location>
</feature>
<feature type="modified residue" description="Phosphothreonine" evidence="2">
    <location>
        <position position="1288"/>
    </location>
</feature>
<feature type="modified residue" description="Phosphotyrosine; by autocatalysis" evidence="2">
    <location>
        <position position="1348"/>
    </location>
</feature>
<feature type="modified residue" description="Phosphotyrosine; by autocatalysis" evidence="2">
    <location>
        <position position="1355"/>
    </location>
</feature>
<feature type="modified residue" description="Phosphotyrosine" evidence="2">
    <location>
        <position position="1364"/>
    </location>
</feature>
<feature type="glycosylation site" description="N-linked (GlcNAc...) asparagine" evidence="4">
    <location>
        <position position="45"/>
    </location>
</feature>
<feature type="glycosylation site" description="N-linked (GlcNAc...) asparagine" evidence="4">
    <location>
        <position position="200"/>
    </location>
</feature>
<feature type="glycosylation site" description="N-linked (GlcNAc...) asparagine" evidence="4">
    <location>
        <position position="397"/>
    </location>
</feature>
<feature type="glycosylation site" description="N-linked (GlcNAc...) asparagine" evidence="4">
    <location>
        <position position="403"/>
    </location>
</feature>
<feature type="glycosylation site" description="N-linked (GlcNAc...) asparagine" evidence="4">
    <location>
        <position position="551"/>
    </location>
</feature>
<feature type="glycosylation site" description="O-linked (Man) threonine" evidence="2">
    <location>
        <position position="580"/>
    </location>
</feature>
<feature type="glycosylation site" description="N-linked (GlcNAc...) asparagine" evidence="4">
    <location>
        <position position="592"/>
    </location>
</feature>
<feature type="glycosylation site" description="N-linked (GlcNAc...) asparagine" evidence="4">
    <location>
        <position position="605"/>
    </location>
</feature>
<feature type="glycosylation site" description="N-linked (GlcNAc...) asparagine" evidence="4">
    <location>
        <position position="633"/>
    </location>
</feature>
<feature type="glycosylation site" description="O-linked (Man) threonine" evidence="2">
    <location>
        <position position="675"/>
    </location>
</feature>
<feature type="glycosylation site" description="O-linked (Man) threonine" evidence="2">
    <location>
        <position position="760"/>
    </location>
</feature>
<feature type="glycosylation site" description="N-linked (GlcNAc...) asparagine" evidence="4">
    <location>
        <position position="784"/>
    </location>
</feature>
<feature type="glycosylation site" description="N-linked (GlcNAc...) asparagine" evidence="4">
    <location>
        <position position="878"/>
    </location>
</feature>
<feature type="glycosylation site" description="N-linked (GlcNAc...) asparagine" evidence="4">
    <location>
        <position position="929"/>
    </location>
</feature>
<feature type="disulfide bond" evidence="6">
    <location>
        <begin position="95"/>
        <end position="101"/>
    </location>
</feature>
<feature type="disulfide bond" evidence="6">
    <location>
        <begin position="98"/>
        <end position="156"/>
    </location>
</feature>
<feature type="disulfide bond" evidence="6">
    <location>
        <begin position="129"/>
        <end position="137"/>
    </location>
</feature>
<feature type="disulfide bond" evidence="6">
    <location>
        <begin position="170"/>
        <end position="173"/>
    </location>
</feature>
<feature type="disulfide bond" evidence="6">
    <location>
        <begin position="296"/>
        <end position="361"/>
    </location>
</feature>
<feature type="disulfide bond" evidence="6">
    <location>
        <begin position="383"/>
        <end position="395"/>
    </location>
</feature>
<feature type="disulfide bond" evidence="6">
    <location>
        <begin position="518"/>
        <end position="536"/>
    </location>
</feature>
<feature type="disulfide bond" evidence="6">
    <location>
        <begin position="524"/>
        <end position="559"/>
    </location>
</feature>
<feature type="disulfide bond" evidence="6">
    <location>
        <begin position="527"/>
        <end position="543"/>
    </location>
</feature>
<feature type="disulfide bond" evidence="6">
    <location>
        <begin position="539"/>
        <end position="549"/>
    </location>
</feature>
<protein>
    <recommendedName>
        <fullName>Hepatocyte growth factor receptor</fullName>
        <shortName>HGF receptor</shortName>
        <ecNumber>2.7.10.1</ecNumber>
    </recommendedName>
    <alternativeName>
        <fullName>HGF/SF receptor</fullName>
    </alternativeName>
    <alternativeName>
        <fullName>Proto-oncogene c-Met</fullName>
    </alternativeName>
    <alternativeName>
        <fullName>Scatter factor receptor</fullName>
        <shortName>SF receptor</shortName>
    </alternativeName>
    <alternativeName>
        <fullName>Tyrosine-protein kinase Met</fullName>
    </alternativeName>
</protein>
<proteinExistence type="inferred from homology"/>
<accession>A1X150</accession>
<dbReference type="EC" id="2.7.10.1"/>
<dbReference type="EMBL" id="DP000274">
    <property type="protein sequence ID" value="ABL76166.1"/>
    <property type="molecule type" value="Genomic_DNA"/>
</dbReference>
<dbReference type="SMR" id="A1X150"/>
<dbReference type="GlyCosmos" id="A1X150">
    <property type="glycosylation" value="11 sites, No reported glycans"/>
</dbReference>
<dbReference type="Proteomes" id="UP000694863">
    <property type="component" value="Unplaced"/>
</dbReference>
<dbReference type="GO" id="GO:0005886">
    <property type="term" value="C:plasma membrane"/>
    <property type="evidence" value="ECO:0007669"/>
    <property type="project" value="TreeGrafter"/>
</dbReference>
<dbReference type="GO" id="GO:0002116">
    <property type="term" value="C:semaphorin receptor complex"/>
    <property type="evidence" value="ECO:0007669"/>
    <property type="project" value="TreeGrafter"/>
</dbReference>
<dbReference type="GO" id="GO:0005524">
    <property type="term" value="F:ATP binding"/>
    <property type="evidence" value="ECO:0007669"/>
    <property type="project" value="UniProtKB-KW"/>
</dbReference>
<dbReference type="GO" id="GO:0017154">
    <property type="term" value="F:semaphorin receptor activity"/>
    <property type="evidence" value="ECO:0007669"/>
    <property type="project" value="InterPro"/>
</dbReference>
<dbReference type="GO" id="GO:0004714">
    <property type="term" value="F:transmembrane receptor protein tyrosine kinase activity"/>
    <property type="evidence" value="ECO:0007669"/>
    <property type="project" value="UniProtKB-EC"/>
</dbReference>
<dbReference type="GO" id="GO:0007169">
    <property type="term" value="P:cell surface receptor protein tyrosine kinase signaling pathway"/>
    <property type="evidence" value="ECO:0007669"/>
    <property type="project" value="InterPro"/>
</dbReference>
<dbReference type="GO" id="GO:0050918">
    <property type="term" value="P:positive chemotaxis"/>
    <property type="evidence" value="ECO:0000250"/>
    <property type="project" value="UniProtKB"/>
</dbReference>
<dbReference type="GO" id="GO:2001028">
    <property type="term" value="P:positive regulation of endothelial cell chemotaxis"/>
    <property type="evidence" value="ECO:0000250"/>
    <property type="project" value="UniProtKB"/>
</dbReference>
<dbReference type="GO" id="GO:0071526">
    <property type="term" value="P:semaphorin-plexin signaling pathway"/>
    <property type="evidence" value="ECO:0000250"/>
    <property type="project" value="UniProtKB"/>
</dbReference>
<dbReference type="CDD" id="cd00603">
    <property type="entry name" value="IPT_PCSR"/>
    <property type="match status" value="1"/>
</dbReference>
<dbReference type="CDD" id="cd01180">
    <property type="entry name" value="IPT_plexin_repeat1"/>
    <property type="match status" value="1"/>
</dbReference>
<dbReference type="CDD" id="cd01179">
    <property type="entry name" value="IPT_plexin_repeat2"/>
    <property type="match status" value="1"/>
</dbReference>
<dbReference type="CDD" id="cd05058">
    <property type="entry name" value="PTKc_Met_Ron"/>
    <property type="match status" value="1"/>
</dbReference>
<dbReference type="FunFam" id="1.10.510.10:FF:000093">
    <property type="entry name" value="Hepatocyte growth factor receptor"/>
    <property type="match status" value="1"/>
</dbReference>
<dbReference type="FunFam" id="2.130.10.10:FF:000088">
    <property type="entry name" value="Hepatocyte growth factor receptor"/>
    <property type="match status" value="1"/>
</dbReference>
<dbReference type="FunFam" id="2.60.40.10:FF:000213">
    <property type="entry name" value="Hepatocyte growth factor receptor"/>
    <property type="match status" value="1"/>
</dbReference>
<dbReference type="FunFam" id="2.60.40.10:FF:000400">
    <property type="entry name" value="Hepatocyte growth factor receptor"/>
    <property type="match status" value="1"/>
</dbReference>
<dbReference type="FunFam" id="2.60.40.10:FF:002708">
    <property type="entry name" value="Hepatocyte growth factor receptor"/>
    <property type="match status" value="1"/>
</dbReference>
<dbReference type="FunFam" id="3.30.200.20:FF:000188">
    <property type="entry name" value="Hepatocyte growth factor receptor"/>
    <property type="match status" value="1"/>
</dbReference>
<dbReference type="Gene3D" id="2.60.40.10">
    <property type="entry name" value="Immunoglobulins"/>
    <property type="match status" value="3"/>
</dbReference>
<dbReference type="Gene3D" id="3.30.200.20">
    <property type="entry name" value="Phosphorylase Kinase, domain 1"/>
    <property type="match status" value="1"/>
</dbReference>
<dbReference type="Gene3D" id="1.10.510.10">
    <property type="entry name" value="Transferase(Phosphotransferase) domain 1"/>
    <property type="match status" value="1"/>
</dbReference>
<dbReference type="Gene3D" id="2.130.10.10">
    <property type="entry name" value="YVTN repeat-like/Quinoprotein amine dehydrogenase"/>
    <property type="match status" value="1"/>
</dbReference>
<dbReference type="InterPro" id="IPR013783">
    <property type="entry name" value="Ig-like_fold"/>
</dbReference>
<dbReference type="InterPro" id="IPR014756">
    <property type="entry name" value="Ig_E-set"/>
</dbReference>
<dbReference type="InterPro" id="IPR002909">
    <property type="entry name" value="IPT_dom"/>
</dbReference>
<dbReference type="InterPro" id="IPR011009">
    <property type="entry name" value="Kinase-like_dom_sf"/>
</dbReference>
<dbReference type="InterPro" id="IPR031148">
    <property type="entry name" value="Plexin"/>
</dbReference>
<dbReference type="InterPro" id="IPR002165">
    <property type="entry name" value="Plexin_repeat"/>
</dbReference>
<dbReference type="InterPro" id="IPR000719">
    <property type="entry name" value="Prot_kinase_dom"/>
</dbReference>
<dbReference type="InterPro" id="IPR017441">
    <property type="entry name" value="Protein_kinase_ATP_BS"/>
</dbReference>
<dbReference type="InterPro" id="IPR016201">
    <property type="entry name" value="PSI"/>
</dbReference>
<dbReference type="InterPro" id="IPR001627">
    <property type="entry name" value="Semap_dom"/>
</dbReference>
<dbReference type="InterPro" id="IPR036352">
    <property type="entry name" value="Semap_dom_sf"/>
</dbReference>
<dbReference type="InterPro" id="IPR001245">
    <property type="entry name" value="Ser-Thr/Tyr_kinase_cat_dom"/>
</dbReference>
<dbReference type="InterPro" id="IPR008266">
    <property type="entry name" value="Tyr_kinase_AS"/>
</dbReference>
<dbReference type="InterPro" id="IPR020635">
    <property type="entry name" value="Tyr_kinase_cat_dom"/>
</dbReference>
<dbReference type="InterPro" id="IPR016244">
    <property type="entry name" value="Tyr_kinase_HGF/MSP_rcpt"/>
</dbReference>
<dbReference type="InterPro" id="IPR015943">
    <property type="entry name" value="WD40/YVTN_repeat-like_dom_sf"/>
</dbReference>
<dbReference type="PANTHER" id="PTHR22625:SF61">
    <property type="entry name" value="HEPATOCYTE GROWTH FACTOR RECEPTOR"/>
    <property type="match status" value="1"/>
</dbReference>
<dbReference type="PANTHER" id="PTHR22625">
    <property type="entry name" value="PLEXIN"/>
    <property type="match status" value="1"/>
</dbReference>
<dbReference type="Pfam" id="PF07714">
    <property type="entry name" value="PK_Tyr_Ser-Thr"/>
    <property type="match status" value="1"/>
</dbReference>
<dbReference type="Pfam" id="PF01437">
    <property type="entry name" value="PSI"/>
    <property type="match status" value="1"/>
</dbReference>
<dbReference type="Pfam" id="PF01403">
    <property type="entry name" value="Sema"/>
    <property type="match status" value="1"/>
</dbReference>
<dbReference type="Pfam" id="PF01833">
    <property type="entry name" value="TIG"/>
    <property type="match status" value="3"/>
</dbReference>
<dbReference type="PIRSF" id="PIRSF000617">
    <property type="entry name" value="TyrPK_HGF-R"/>
    <property type="match status" value="1"/>
</dbReference>
<dbReference type="PRINTS" id="PR00109">
    <property type="entry name" value="TYRKINASE"/>
</dbReference>
<dbReference type="SMART" id="SM00429">
    <property type="entry name" value="IPT"/>
    <property type="match status" value="4"/>
</dbReference>
<dbReference type="SMART" id="SM00423">
    <property type="entry name" value="PSI"/>
    <property type="match status" value="1"/>
</dbReference>
<dbReference type="SMART" id="SM00630">
    <property type="entry name" value="Sema"/>
    <property type="match status" value="1"/>
</dbReference>
<dbReference type="SMART" id="SM00219">
    <property type="entry name" value="TyrKc"/>
    <property type="match status" value="1"/>
</dbReference>
<dbReference type="SUPFAM" id="SSF81296">
    <property type="entry name" value="E set domains"/>
    <property type="match status" value="3"/>
</dbReference>
<dbReference type="SUPFAM" id="SSF103575">
    <property type="entry name" value="Plexin repeat"/>
    <property type="match status" value="1"/>
</dbReference>
<dbReference type="SUPFAM" id="SSF56112">
    <property type="entry name" value="Protein kinase-like (PK-like)"/>
    <property type="match status" value="1"/>
</dbReference>
<dbReference type="SUPFAM" id="SSF101912">
    <property type="entry name" value="Sema domain"/>
    <property type="match status" value="1"/>
</dbReference>
<dbReference type="PROSITE" id="PS00107">
    <property type="entry name" value="PROTEIN_KINASE_ATP"/>
    <property type="match status" value="1"/>
</dbReference>
<dbReference type="PROSITE" id="PS50011">
    <property type="entry name" value="PROTEIN_KINASE_DOM"/>
    <property type="match status" value="1"/>
</dbReference>
<dbReference type="PROSITE" id="PS00109">
    <property type="entry name" value="PROTEIN_KINASE_TYR"/>
    <property type="match status" value="1"/>
</dbReference>
<dbReference type="PROSITE" id="PS51004">
    <property type="entry name" value="SEMA"/>
    <property type="match status" value="1"/>
</dbReference>
<gene>
    <name type="primary">MET</name>
</gene>
<keyword id="KW-0067">ATP-binding</keyword>
<keyword id="KW-1015">Disulfide bond</keyword>
<keyword id="KW-0325">Glycoprotein</keyword>
<keyword id="KW-0418">Kinase</keyword>
<keyword id="KW-0472">Membrane</keyword>
<keyword id="KW-0547">Nucleotide-binding</keyword>
<keyword id="KW-0597">Phosphoprotein</keyword>
<keyword id="KW-0656">Proto-oncogene</keyword>
<keyword id="KW-0675">Receptor</keyword>
<keyword id="KW-0677">Repeat</keyword>
<keyword id="KW-0732">Signal</keyword>
<keyword id="KW-0808">Transferase</keyword>
<keyword id="KW-0812">Transmembrane</keyword>
<keyword id="KW-1133">Transmembrane helix</keyword>
<keyword id="KW-0829">Tyrosine-protein kinase</keyword>
<keyword id="KW-0832">Ubl conjugation</keyword>
<comment type="function">
    <text evidence="1">Receptor tyrosine kinase that transduces signals from the extracellular matrix into the cytoplasm by binding to hepatocyte growth factor/HGF ligand. Regulates many physiological processes including proliferation, scattering, morphogenesis and survival. Ligand binding at the cell surface induces autophosphorylation of MET on its intracellular domain that provides docking sites for downstream signaling molecules. Following activation by ligand, interacts with the PI3-kinase subunit PIK3R1, PLCG1, SRC, GRB2, STAT3 or the adapter GAB1. Recruitment of these downstream effectors by MET leads to the activation of several signaling cascades including the RAS-ERK, PI3 kinase-AKT, or PLCgamma-PKC. The RAS-ERK activation is associated with the morphogenetic effects while PI3K/AKT coordinates prosurvival effects. During embryonic development, MET signaling plays a role in gastrulation, development and migration of muscles and neuronal precursors, angiogenesis and kidney formation. In adults, participates in wound healing as well as organ regeneration and tissue remodeling. Also promotes differentiation and proliferation of hematopoietic cells (By similarity).</text>
</comment>
<comment type="catalytic activity">
    <reaction evidence="7">
        <text>L-tyrosyl-[protein] + ATP = O-phospho-L-tyrosyl-[protein] + ADP + H(+)</text>
        <dbReference type="Rhea" id="RHEA:10596"/>
        <dbReference type="Rhea" id="RHEA-COMP:10136"/>
        <dbReference type="Rhea" id="RHEA-COMP:20101"/>
        <dbReference type="ChEBI" id="CHEBI:15378"/>
        <dbReference type="ChEBI" id="CHEBI:30616"/>
        <dbReference type="ChEBI" id="CHEBI:46858"/>
        <dbReference type="ChEBI" id="CHEBI:61978"/>
        <dbReference type="ChEBI" id="CHEBI:456216"/>
        <dbReference type="EC" id="2.7.10.1"/>
    </reaction>
</comment>
<comment type="activity regulation">
    <text evidence="1">In its inactive state, the C-terminal tail interacts with the catalytic domain and inhibits the kinase activity. Upon ligand binding, the C-terminal tail is displaced and becomes phosphorylated, thus increasing the kinase activity (By similarity).</text>
</comment>
<comment type="subunit">
    <text evidence="2 3">Heterodimer made of an alpha chain (50 kDa) and a beta chain (145 kDa) which are disulfide linked. Binds PLXNB1. Interacts when phosphorylated with downstream effectors including STAT3, PIK3R1, SRC, PCLG1, GRB2 and GAB1. Interacts with SPSB1, SPSB2 and SPSB4. Interacts with INPP5D/SHIP1. When phosphorylated at Tyr-1355, interacts with INPPL1/SHIP2. Interacts with RANBP9 and RANBP10, as well as SPSB1, SPSB2, SPSB3 and SPSB4. SPSB1 binding occurs in the presence and in the absence of HGF, however HGF treatment has a positive effect on this interaction. Interacts with MUC20; prevents interaction with GRB2 and suppresses hepatocyte growth factor-induced cell proliferation. Interacts with GRB10. Interacts with PTPN1 and PTPN2. Interacts with HSP90AA1 and HSP90AB1; the interaction suppresses MET kinase activity. Interacts with tensin TNS3 (By similarity). Interacts (when phosphorylated) with tensin TNS4 (via SH2 domain); the interaction increases MET protein stability by inhibiting MET endocytosis and subsequent lysosomal degradation (By similarity).</text>
</comment>
<comment type="subcellular location">
    <subcellularLocation>
        <location evidence="1">Membrane</location>
        <topology evidence="1">Single-pass type I membrane protein</topology>
    </subcellularLocation>
</comment>
<comment type="domain">
    <text evidence="1">The kinase domain is involved in SPSB1 binding.</text>
</comment>
<comment type="domain">
    <text evidence="1">The beta-propeller Sema domain mediates binding to HGF.</text>
</comment>
<comment type="PTM">
    <text evidence="2">Autophosphorylated in response to ligand binding on Tyr-1233 and Tyr-1234 in the kinase domain leading to further phosphorylation of Tyr-1348 and Tyr-1355 in the C-terminal multifunctional docking site. Dephosphorylated by PTPRJ at Tyr-1348 and Tyr-1364. Dephosphorylated by PTPN1 and PTPN2 (By similarity).</text>
</comment>
<comment type="PTM">
    <text evidence="2">Ubiquitinated. Ubiquitination by CBL regulates the receptor stability and activity through proteasomal degradation (By similarity).</text>
</comment>
<comment type="PTM">
    <text evidence="2">O-mannosylation of IPT/TIG domains by TMEM260 is required for protein maturation. O-mannosylated residues are composed of single mannose glycans that are not elongated or modified.</text>
</comment>
<comment type="similarity">
    <text evidence="5">Belongs to the protein kinase superfamily. Tyr protein kinase family.</text>
</comment>